<name>HSSS_STAA3</name>
<keyword id="KW-0067">ATP-binding</keyword>
<keyword id="KW-1003">Cell membrane</keyword>
<keyword id="KW-0418">Kinase</keyword>
<keyword id="KW-0472">Membrane</keyword>
<keyword id="KW-0547">Nucleotide-binding</keyword>
<keyword id="KW-0597">Phosphoprotein</keyword>
<keyword id="KW-0808">Transferase</keyword>
<keyword id="KW-0812">Transmembrane</keyword>
<keyword id="KW-1133">Transmembrane helix</keyword>
<keyword id="KW-0902">Two-component regulatory system</keyword>
<keyword id="KW-0843">Virulence</keyword>
<evidence type="ECO:0000250" key="1"/>
<evidence type="ECO:0000255" key="2"/>
<evidence type="ECO:0000255" key="3">
    <source>
        <dbReference type="PROSITE-ProRule" id="PRU00102"/>
    </source>
</evidence>
<evidence type="ECO:0000255" key="4">
    <source>
        <dbReference type="PROSITE-ProRule" id="PRU00107"/>
    </source>
</evidence>
<dbReference type="EC" id="2.7.13.3"/>
<dbReference type="EMBL" id="CP000255">
    <property type="protein sequence ID" value="ABD20812.1"/>
    <property type="molecule type" value="Genomic_DNA"/>
</dbReference>
<dbReference type="RefSeq" id="WP_000477329.1">
    <property type="nucleotide sequence ID" value="NZ_CP027476.1"/>
</dbReference>
<dbReference type="SMR" id="Q2FED4"/>
<dbReference type="KEGG" id="saa:SAUSA300_2309"/>
<dbReference type="HOGENOM" id="CLU_000445_89_6_9"/>
<dbReference type="OMA" id="RRFEVWP"/>
<dbReference type="Proteomes" id="UP000001939">
    <property type="component" value="Chromosome"/>
</dbReference>
<dbReference type="GO" id="GO:0005886">
    <property type="term" value="C:plasma membrane"/>
    <property type="evidence" value="ECO:0007669"/>
    <property type="project" value="UniProtKB-SubCell"/>
</dbReference>
<dbReference type="GO" id="GO:0005524">
    <property type="term" value="F:ATP binding"/>
    <property type="evidence" value="ECO:0007669"/>
    <property type="project" value="UniProtKB-KW"/>
</dbReference>
<dbReference type="GO" id="GO:0000155">
    <property type="term" value="F:phosphorelay sensor kinase activity"/>
    <property type="evidence" value="ECO:0007669"/>
    <property type="project" value="InterPro"/>
</dbReference>
<dbReference type="CDD" id="cd06225">
    <property type="entry name" value="HAMP"/>
    <property type="match status" value="1"/>
</dbReference>
<dbReference type="CDD" id="cd00082">
    <property type="entry name" value="HisKA"/>
    <property type="match status" value="1"/>
</dbReference>
<dbReference type="FunFam" id="3.30.565.10:FF:000006">
    <property type="entry name" value="Sensor histidine kinase WalK"/>
    <property type="match status" value="1"/>
</dbReference>
<dbReference type="Gene3D" id="1.10.287.130">
    <property type="match status" value="1"/>
</dbReference>
<dbReference type="Gene3D" id="6.10.340.10">
    <property type="match status" value="1"/>
</dbReference>
<dbReference type="Gene3D" id="3.30.565.10">
    <property type="entry name" value="Histidine kinase-like ATPase, C-terminal domain"/>
    <property type="match status" value="1"/>
</dbReference>
<dbReference type="InterPro" id="IPR050398">
    <property type="entry name" value="Bact_Sensor_His_Kinase"/>
</dbReference>
<dbReference type="InterPro" id="IPR003660">
    <property type="entry name" value="HAMP_dom"/>
</dbReference>
<dbReference type="InterPro" id="IPR036890">
    <property type="entry name" value="HATPase_C_sf"/>
</dbReference>
<dbReference type="InterPro" id="IPR005467">
    <property type="entry name" value="His_kinase_dom"/>
</dbReference>
<dbReference type="InterPro" id="IPR003661">
    <property type="entry name" value="HisK_dim/P_dom"/>
</dbReference>
<dbReference type="InterPro" id="IPR036097">
    <property type="entry name" value="HisK_dim/P_sf"/>
</dbReference>
<dbReference type="InterPro" id="IPR004358">
    <property type="entry name" value="Sig_transdc_His_kin-like_C"/>
</dbReference>
<dbReference type="PANTHER" id="PTHR45528:SF11">
    <property type="entry name" value="HISTIDINE KINASE"/>
    <property type="match status" value="1"/>
</dbReference>
<dbReference type="PANTHER" id="PTHR45528">
    <property type="entry name" value="SENSOR HISTIDINE KINASE CPXA"/>
    <property type="match status" value="1"/>
</dbReference>
<dbReference type="Pfam" id="PF00672">
    <property type="entry name" value="HAMP"/>
    <property type="match status" value="1"/>
</dbReference>
<dbReference type="Pfam" id="PF02518">
    <property type="entry name" value="HATPase_c"/>
    <property type="match status" value="1"/>
</dbReference>
<dbReference type="Pfam" id="PF00512">
    <property type="entry name" value="HisKA"/>
    <property type="match status" value="1"/>
</dbReference>
<dbReference type="PRINTS" id="PR00344">
    <property type="entry name" value="BCTRLSENSOR"/>
</dbReference>
<dbReference type="SMART" id="SM00304">
    <property type="entry name" value="HAMP"/>
    <property type="match status" value="1"/>
</dbReference>
<dbReference type="SMART" id="SM00387">
    <property type="entry name" value="HATPase_c"/>
    <property type="match status" value="1"/>
</dbReference>
<dbReference type="SMART" id="SM00388">
    <property type="entry name" value="HisKA"/>
    <property type="match status" value="1"/>
</dbReference>
<dbReference type="SUPFAM" id="SSF55874">
    <property type="entry name" value="ATPase domain of HSP90 chaperone/DNA topoisomerase II/histidine kinase"/>
    <property type="match status" value="1"/>
</dbReference>
<dbReference type="SUPFAM" id="SSF158472">
    <property type="entry name" value="HAMP domain-like"/>
    <property type="match status" value="1"/>
</dbReference>
<dbReference type="SUPFAM" id="SSF47384">
    <property type="entry name" value="Homodimeric domain of signal transducing histidine kinase"/>
    <property type="match status" value="1"/>
</dbReference>
<dbReference type="PROSITE" id="PS50885">
    <property type="entry name" value="HAMP"/>
    <property type="match status" value="1"/>
</dbReference>
<dbReference type="PROSITE" id="PS50109">
    <property type="entry name" value="HIS_KIN"/>
    <property type="match status" value="1"/>
</dbReference>
<feature type="chain" id="PRO_0000331350" description="Heme sensor protein HssS">
    <location>
        <begin position="1"/>
        <end position="457"/>
    </location>
</feature>
<feature type="transmembrane region" description="Helical" evidence="2">
    <location>
        <begin position="9"/>
        <end position="29"/>
    </location>
</feature>
<feature type="transmembrane region" description="Helical" evidence="2">
    <location>
        <begin position="164"/>
        <end position="184"/>
    </location>
</feature>
<feature type="domain" description="HAMP" evidence="3">
    <location>
        <begin position="186"/>
        <end position="238"/>
    </location>
</feature>
<feature type="domain" description="Histidine kinase" evidence="4">
    <location>
        <begin position="246"/>
        <end position="456"/>
    </location>
</feature>
<feature type="modified residue" description="Phosphohistidine; by autocatalysis" evidence="4">
    <location>
        <position position="249"/>
    </location>
</feature>
<accession>Q2FED4</accession>
<reference key="1">
    <citation type="journal article" date="2006" name="Lancet">
        <title>Complete genome sequence of USA300, an epidemic clone of community-acquired meticillin-resistant Staphylococcus aureus.</title>
        <authorList>
            <person name="Diep B.A."/>
            <person name="Gill S.R."/>
            <person name="Chang R.F."/>
            <person name="Phan T.H."/>
            <person name="Chen J.H."/>
            <person name="Davidson M.G."/>
            <person name="Lin F."/>
            <person name="Lin J."/>
            <person name="Carleton H.A."/>
            <person name="Mongodin E.F."/>
            <person name="Sensabaugh G.F."/>
            <person name="Perdreau-Remington F."/>
        </authorList>
    </citation>
    <scope>NUCLEOTIDE SEQUENCE [LARGE SCALE GENOMIC DNA]</scope>
    <source>
        <strain>USA300</strain>
    </source>
</reference>
<protein>
    <recommendedName>
        <fullName>Heme sensor protein HssS</fullName>
        <ecNumber>2.7.13.3</ecNumber>
    </recommendedName>
</protein>
<proteinExistence type="inferred from homology"/>
<gene>
    <name type="primary">hssS</name>
    <name type="ordered locus">SAUSA300_2309</name>
</gene>
<comment type="function">
    <text evidence="1">Member of the two-component regulatory system HssS/HssR involved in intracellular heme homeostasis and tempering of staphylococcal virulence. HssS functions as a heme sensor histidine kinase which is autophosphorylated at a histidine residue and transfers its phosphate group to an aspartate residue of HssR. HssR/HssS activates the expression of hrtAB, an efflux pump, in response to extracellular heme, hemin, hemoglobin or blood (By similarity).</text>
</comment>
<comment type="catalytic activity">
    <reaction>
        <text>ATP + protein L-histidine = ADP + protein N-phospho-L-histidine.</text>
        <dbReference type="EC" id="2.7.13.3"/>
    </reaction>
</comment>
<comment type="subcellular location">
    <subcellularLocation>
        <location evidence="1">Cell membrane</location>
        <topology evidence="1">Multi-pass membrane protein</topology>
    </subcellularLocation>
</comment>
<comment type="PTM">
    <text evidence="1">Autophosphorylated.</text>
</comment>
<organism>
    <name type="scientific">Staphylococcus aureus (strain USA300)</name>
    <dbReference type="NCBI Taxonomy" id="367830"/>
    <lineage>
        <taxon>Bacteria</taxon>
        <taxon>Bacillati</taxon>
        <taxon>Bacillota</taxon>
        <taxon>Bacilli</taxon>
        <taxon>Bacillales</taxon>
        <taxon>Staphylococcaceae</taxon>
        <taxon>Staphylococcus</taxon>
    </lineage>
</organism>
<sequence>MFKTLYARIAIYSITVILFSALISFVLTNVYYHYNLKASNDAKIMKTLKEARQYEQSAKPTHIQQYFKHLGQMNYQIMTIDQKGHKTFYGEPFREDTLSQNAINNVLNNQDYHGIKDKPFALFVTGFFDNVTDNTVGINFKTKDGSIAVFMRPDIGETFSEFRTFLAVLLMLLLFISISLVIASTYSIIRPVKKLKLATERLIDGDFETPIKQTRKDEIGTLQYHFNKMRESLGQVDQMRQHFVQNVSHEIKTPLTHIHHLLSELQQTSDKTLRQQYINDIYTITTQLSGLTTELLLLSELDNHQHLLFDDKIQVNQLIKDIIRHEQFAADEKSLIILADLESINFLGNQRLLHQALSNLLINAIKYTDVGGAIDIALQHSHNNIIFTISNDGSPISPQAEARLFERFYKVSKHDNSNGLGLAITKSIIELHHGTIQFTQSNEYVTTFTITLPNNSL</sequence>